<proteinExistence type="inferred from homology"/>
<comment type="function">
    <text evidence="2">Component of the ubiquinol-cytochrome c reductase complex (complex III or cytochrome b-c1 complex) that is part of the mitochondrial respiratory chain. The b-c1 complex mediates electron transfer from ubiquinol to cytochrome c. Contributes to the generation of a proton gradient across the mitochondrial membrane that is then used for ATP synthesis.</text>
</comment>
<comment type="cofactor">
    <cofactor evidence="2">
        <name>heme b</name>
        <dbReference type="ChEBI" id="CHEBI:60344"/>
    </cofactor>
    <text evidence="2">Binds 2 heme b groups non-covalently.</text>
</comment>
<comment type="subunit">
    <text evidence="2">The cytochrome bc1 complex contains 11 subunits: 3 respiratory subunits (MT-CYB, CYC1 and UQCRFS1), 2 core proteins (UQCRC1 and UQCRC2) and 6 low-molecular weight proteins (UQCRH/QCR6, UQCRB/QCR7, UQCRQ/QCR8, UQCR10/QCR9, UQCR11/QCR10 and a cleavage product of UQCRFS1). This cytochrome bc1 complex then forms a dimer.</text>
</comment>
<comment type="subcellular location">
    <subcellularLocation>
        <location evidence="2">Mitochondrion inner membrane</location>
        <topology evidence="2">Multi-pass membrane protein</topology>
    </subcellularLocation>
</comment>
<comment type="miscellaneous">
    <text evidence="1">Heme 1 (or BL or b562) is low-potential and absorbs at about 562 nm, and heme 2 (or BH or b566) is high-potential and absorbs at about 566 nm.</text>
</comment>
<comment type="similarity">
    <text evidence="3 4">Belongs to the cytochrome b family.</text>
</comment>
<comment type="caution">
    <text evidence="2">The full-length protein contains only eight transmembrane helices, not nine as predicted by bioinformatics tools.</text>
</comment>
<gene>
    <name type="primary">MT-CYB</name>
    <name type="synonym">COB</name>
    <name type="synonym">CYTB</name>
    <name type="synonym">MTCYB</name>
</gene>
<name>CYB_CAPPY</name>
<sequence length="379" mass="42786">MTNIRKTHPLMKIVNNAFIDLPAPSNISSWWNFGSLLGICLILQILTGLFLAMHYTSDTMTAFSSVTHICRDVNYGWIIRYMHANGASMFFICLFLHVGRGLYYGSYTFLETWNIGVILLFTVMATAFVGYVLPWGQMSFWGATVITNLLSAIPYIGTNLVEWIWGGFSVDKATLTRFFAFHFILPFIIAALAMVHLLFLHETGSNNPTGIPSNADKIPFHPYYTIKDILGILLLILSLMLLVLFAPDLLGDPDNYTPANPLNTPPHIKPEWYFLFAYAILRSIPNKLGGVLALVSSILILILMPLLHTSKQRSMMFRPFSQCLFWILVADLLTLTWIGGQPVEYPFITIGQIASIMYFLIILVLMPITSTIENNLLKW</sequence>
<organism>
    <name type="scientific">Capreolus pygargus</name>
    <name type="common">Eastern roe deer</name>
    <dbReference type="NCBI Taxonomy" id="48560"/>
    <lineage>
        <taxon>Eukaryota</taxon>
        <taxon>Metazoa</taxon>
        <taxon>Chordata</taxon>
        <taxon>Craniata</taxon>
        <taxon>Vertebrata</taxon>
        <taxon>Euteleostomi</taxon>
        <taxon>Mammalia</taxon>
        <taxon>Eutheria</taxon>
        <taxon>Laurasiatheria</taxon>
        <taxon>Artiodactyla</taxon>
        <taxon>Ruminantia</taxon>
        <taxon>Pecora</taxon>
        <taxon>Cervidae</taxon>
        <taxon>Odocoileinae</taxon>
        <taxon>Capreolus</taxon>
    </lineage>
</organism>
<reference key="1">
    <citation type="journal article" date="1998" name="Proc. R. Soc. B">
        <title>New phylogenetic perspectives on the Cervidae (Artiodactyla) are provided by the mitochondrial cytochrome b gene.</title>
        <authorList>
            <person name="Randi E."/>
            <person name="Mucci N."/>
            <person name="Pierpaoli M."/>
            <person name="Douzery E.J.P."/>
        </authorList>
    </citation>
    <scope>NUCLEOTIDE SEQUENCE [GENOMIC DNA]</scope>
</reference>
<geneLocation type="mitochondrion"/>
<keyword id="KW-0249">Electron transport</keyword>
<keyword id="KW-0349">Heme</keyword>
<keyword id="KW-0408">Iron</keyword>
<keyword id="KW-0472">Membrane</keyword>
<keyword id="KW-0479">Metal-binding</keyword>
<keyword id="KW-0496">Mitochondrion</keyword>
<keyword id="KW-0999">Mitochondrion inner membrane</keyword>
<keyword id="KW-0679">Respiratory chain</keyword>
<keyword id="KW-0812">Transmembrane</keyword>
<keyword id="KW-1133">Transmembrane helix</keyword>
<keyword id="KW-0813">Transport</keyword>
<keyword id="KW-0830">Ubiquinone</keyword>
<protein>
    <recommendedName>
        <fullName>Cytochrome b</fullName>
    </recommendedName>
    <alternativeName>
        <fullName>Complex III subunit 3</fullName>
    </alternativeName>
    <alternativeName>
        <fullName>Complex III subunit III</fullName>
    </alternativeName>
    <alternativeName>
        <fullName>Cytochrome b-c1 complex subunit 3</fullName>
    </alternativeName>
    <alternativeName>
        <fullName>Ubiquinol-cytochrome-c reductase complex cytochrome b subunit</fullName>
    </alternativeName>
</protein>
<evidence type="ECO:0000250" key="1"/>
<evidence type="ECO:0000250" key="2">
    <source>
        <dbReference type="UniProtKB" id="P00157"/>
    </source>
</evidence>
<evidence type="ECO:0000255" key="3">
    <source>
        <dbReference type="PROSITE-ProRule" id="PRU00967"/>
    </source>
</evidence>
<evidence type="ECO:0000255" key="4">
    <source>
        <dbReference type="PROSITE-ProRule" id="PRU00968"/>
    </source>
</evidence>
<dbReference type="EMBL" id="AJ000025">
    <property type="protein sequence ID" value="CAA03864.1"/>
    <property type="molecule type" value="Genomic_DNA"/>
</dbReference>
<dbReference type="RefSeq" id="YP_009092056.1">
    <property type="nucleotide sequence ID" value="NC_025271.1"/>
</dbReference>
<dbReference type="SMR" id="O47926"/>
<dbReference type="GeneID" id="20832296"/>
<dbReference type="CTD" id="4519"/>
<dbReference type="GO" id="GO:0005743">
    <property type="term" value="C:mitochondrial inner membrane"/>
    <property type="evidence" value="ECO:0007669"/>
    <property type="project" value="UniProtKB-SubCell"/>
</dbReference>
<dbReference type="GO" id="GO:0045275">
    <property type="term" value="C:respiratory chain complex III"/>
    <property type="evidence" value="ECO:0007669"/>
    <property type="project" value="InterPro"/>
</dbReference>
<dbReference type="GO" id="GO:0046872">
    <property type="term" value="F:metal ion binding"/>
    <property type="evidence" value="ECO:0007669"/>
    <property type="project" value="UniProtKB-KW"/>
</dbReference>
<dbReference type="GO" id="GO:0008121">
    <property type="term" value="F:ubiquinol-cytochrome-c reductase activity"/>
    <property type="evidence" value="ECO:0007669"/>
    <property type="project" value="InterPro"/>
</dbReference>
<dbReference type="GO" id="GO:0006122">
    <property type="term" value="P:mitochondrial electron transport, ubiquinol to cytochrome c"/>
    <property type="evidence" value="ECO:0007669"/>
    <property type="project" value="TreeGrafter"/>
</dbReference>
<dbReference type="CDD" id="cd00290">
    <property type="entry name" value="cytochrome_b_C"/>
    <property type="match status" value="1"/>
</dbReference>
<dbReference type="CDD" id="cd00284">
    <property type="entry name" value="Cytochrome_b_N"/>
    <property type="match status" value="1"/>
</dbReference>
<dbReference type="FunFam" id="1.20.810.10:FF:000002">
    <property type="entry name" value="Cytochrome b"/>
    <property type="match status" value="1"/>
</dbReference>
<dbReference type="Gene3D" id="1.20.810.10">
    <property type="entry name" value="Cytochrome Bc1 Complex, Chain C"/>
    <property type="match status" value="1"/>
</dbReference>
<dbReference type="InterPro" id="IPR005798">
    <property type="entry name" value="Cyt_b/b6_C"/>
</dbReference>
<dbReference type="InterPro" id="IPR036150">
    <property type="entry name" value="Cyt_b/b6_C_sf"/>
</dbReference>
<dbReference type="InterPro" id="IPR005797">
    <property type="entry name" value="Cyt_b/b6_N"/>
</dbReference>
<dbReference type="InterPro" id="IPR027387">
    <property type="entry name" value="Cytb/b6-like_sf"/>
</dbReference>
<dbReference type="InterPro" id="IPR030689">
    <property type="entry name" value="Cytochrome_b"/>
</dbReference>
<dbReference type="InterPro" id="IPR048260">
    <property type="entry name" value="Cytochrome_b_C_euk/bac"/>
</dbReference>
<dbReference type="InterPro" id="IPR048259">
    <property type="entry name" value="Cytochrome_b_N_euk/bac"/>
</dbReference>
<dbReference type="InterPro" id="IPR016174">
    <property type="entry name" value="Di-haem_cyt_TM"/>
</dbReference>
<dbReference type="PANTHER" id="PTHR19271">
    <property type="entry name" value="CYTOCHROME B"/>
    <property type="match status" value="1"/>
</dbReference>
<dbReference type="PANTHER" id="PTHR19271:SF16">
    <property type="entry name" value="CYTOCHROME B"/>
    <property type="match status" value="1"/>
</dbReference>
<dbReference type="Pfam" id="PF00032">
    <property type="entry name" value="Cytochrom_B_C"/>
    <property type="match status" value="1"/>
</dbReference>
<dbReference type="Pfam" id="PF00033">
    <property type="entry name" value="Cytochrome_B"/>
    <property type="match status" value="1"/>
</dbReference>
<dbReference type="PIRSF" id="PIRSF038885">
    <property type="entry name" value="COB"/>
    <property type="match status" value="1"/>
</dbReference>
<dbReference type="SUPFAM" id="SSF81648">
    <property type="entry name" value="a domain/subunit of cytochrome bc1 complex (Ubiquinol-cytochrome c reductase)"/>
    <property type="match status" value="1"/>
</dbReference>
<dbReference type="SUPFAM" id="SSF81342">
    <property type="entry name" value="Transmembrane di-heme cytochromes"/>
    <property type="match status" value="1"/>
</dbReference>
<dbReference type="PROSITE" id="PS51003">
    <property type="entry name" value="CYTB_CTER"/>
    <property type="match status" value="1"/>
</dbReference>
<dbReference type="PROSITE" id="PS51002">
    <property type="entry name" value="CYTB_NTER"/>
    <property type="match status" value="1"/>
</dbReference>
<accession>O47926</accession>
<feature type="chain" id="PRO_0000060729" description="Cytochrome b">
    <location>
        <begin position="1"/>
        <end position="379"/>
    </location>
</feature>
<feature type="transmembrane region" description="Helical" evidence="2">
    <location>
        <begin position="33"/>
        <end position="53"/>
    </location>
</feature>
<feature type="transmembrane region" description="Helical" evidence="2">
    <location>
        <begin position="77"/>
        <end position="98"/>
    </location>
</feature>
<feature type="transmembrane region" description="Helical" evidence="2">
    <location>
        <begin position="113"/>
        <end position="133"/>
    </location>
</feature>
<feature type="transmembrane region" description="Helical" evidence="2">
    <location>
        <begin position="178"/>
        <end position="198"/>
    </location>
</feature>
<feature type="transmembrane region" description="Helical" evidence="2">
    <location>
        <begin position="226"/>
        <end position="246"/>
    </location>
</feature>
<feature type="transmembrane region" description="Helical" evidence="2">
    <location>
        <begin position="288"/>
        <end position="308"/>
    </location>
</feature>
<feature type="transmembrane region" description="Helical" evidence="2">
    <location>
        <begin position="320"/>
        <end position="340"/>
    </location>
</feature>
<feature type="transmembrane region" description="Helical" evidence="2">
    <location>
        <begin position="347"/>
        <end position="367"/>
    </location>
</feature>
<feature type="binding site" description="axial binding residue" evidence="2">
    <location>
        <position position="83"/>
    </location>
    <ligand>
        <name>heme b</name>
        <dbReference type="ChEBI" id="CHEBI:60344"/>
        <label>b562</label>
    </ligand>
    <ligandPart>
        <name>Fe</name>
        <dbReference type="ChEBI" id="CHEBI:18248"/>
    </ligandPart>
</feature>
<feature type="binding site" description="axial binding residue" evidence="2">
    <location>
        <position position="97"/>
    </location>
    <ligand>
        <name>heme b</name>
        <dbReference type="ChEBI" id="CHEBI:60344"/>
        <label>b566</label>
    </ligand>
    <ligandPart>
        <name>Fe</name>
        <dbReference type="ChEBI" id="CHEBI:18248"/>
    </ligandPart>
</feature>
<feature type="binding site" description="axial binding residue" evidence="2">
    <location>
        <position position="182"/>
    </location>
    <ligand>
        <name>heme b</name>
        <dbReference type="ChEBI" id="CHEBI:60344"/>
        <label>b562</label>
    </ligand>
    <ligandPart>
        <name>Fe</name>
        <dbReference type="ChEBI" id="CHEBI:18248"/>
    </ligandPart>
</feature>
<feature type="binding site" description="axial binding residue" evidence="2">
    <location>
        <position position="196"/>
    </location>
    <ligand>
        <name>heme b</name>
        <dbReference type="ChEBI" id="CHEBI:60344"/>
        <label>b566</label>
    </ligand>
    <ligandPart>
        <name>Fe</name>
        <dbReference type="ChEBI" id="CHEBI:18248"/>
    </ligandPart>
</feature>
<feature type="binding site" evidence="2">
    <location>
        <position position="201"/>
    </location>
    <ligand>
        <name>a ubiquinone</name>
        <dbReference type="ChEBI" id="CHEBI:16389"/>
    </ligand>
</feature>